<accession>Q43582</accession>
<organism>
    <name type="scientific">Nicotiana tabacum</name>
    <name type="common">Common tobacco</name>
    <dbReference type="NCBI Taxonomy" id="4097"/>
    <lineage>
        <taxon>Eukaryota</taxon>
        <taxon>Viridiplantae</taxon>
        <taxon>Streptophyta</taxon>
        <taxon>Embryophyta</taxon>
        <taxon>Tracheophyta</taxon>
        <taxon>Spermatophyta</taxon>
        <taxon>Magnoliopsida</taxon>
        <taxon>eudicotyledons</taxon>
        <taxon>Gunneridae</taxon>
        <taxon>Pentapetalae</taxon>
        <taxon>asterids</taxon>
        <taxon>lamiids</taxon>
        <taxon>Solanales</taxon>
        <taxon>Solanaceae</taxon>
        <taxon>Nicotianoideae</taxon>
        <taxon>Nicotianeae</taxon>
        <taxon>Nicotiana</taxon>
    </lineage>
</organism>
<sequence>MLPLSLLKTAQGHPMLVELKNGETYNGHLVNCDTWMNIHLREVICTSKDGDRFWRMPECYVRGNTIKYLRVPDEVIDKVQEEAKSRTDRKPPGVGRARARGGRDDSAVGRQPKGIGRGMDDGGAKGRGKGGPSAKSGGRGGGRGRG</sequence>
<comment type="function">
    <text evidence="1">Binds specifically to the 3'-terminal U-tract of U6 snRNA.</text>
</comment>
<comment type="subunit">
    <text evidence="1">LSm subunits form a heteromer with a doughnut shape.</text>
</comment>
<comment type="subcellular location">
    <subcellularLocation>
        <location evidence="4">Nucleus</location>
    </subcellularLocation>
</comment>
<comment type="similarity">
    <text evidence="4">Belongs to the snRNP Sm proteins family.</text>
</comment>
<evidence type="ECO:0000250" key="1"/>
<evidence type="ECO:0000255" key="2">
    <source>
        <dbReference type="PROSITE-ProRule" id="PRU01346"/>
    </source>
</evidence>
<evidence type="ECO:0000256" key="3">
    <source>
        <dbReference type="SAM" id="MobiDB-lite"/>
    </source>
</evidence>
<evidence type="ECO:0000305" key="4"/>
<dbReference type="EMBL" id="X83731">
    <property type="protein sequence ID" value="CAA58702.1"/>
    <property type="molecule type" value="mRNA"/>
</dbReference>
<dbReference type="PIR" id="S54169">
    <property type="entry name" value="S54169"/>
</dbReference>
<dbReference type="SMR" id="Q43582"/>
<dbReference type="STRING" id="4097.Q43582"/>
<dbReference type="PaxDb" id="4097-Q43582"/>
<dbReference type="Proteomes" id="UP000084051">
    <property type="component" value="Unplaced"/>
</dbReference>
<dbReference type="GO" id="GO:0000932">
    <property type="term" value="C:P-body"/>
    <property type="evidence" value="ECO:0000318"/>
    <property type="project" value="GO_Central"/>
</dbReference>
<dbReference type="GO" id="GO:0005681">
    <property type="term" value="C:spliceosomal complex"/>
    <property type="evidence" value="ECO:0007669"/>
    <property type="project" value="UniProtKB-KW"/>
</dbReference>
<dbReference type="GO" id="GO:0097526">
    <property type="term" value="C:spliceosomal tri-snRNP complex"/>
    <property type="evidence" value="ECO:0000318"/>
    <property type="project" value="GO_Central"/>
</dbReference>
<dbReference type="GO" id="GO:0005688">
    <property type="term" value="C:U6 snRNP"/>
    <property type="evidence" value="ECO:0000318"/>
    <property type="project" value="GO_Central"/>
</dbReference>
<dbReference type="GO" id="GO:0017070">
    <property type="term" value="F:U6 snRNA binding"/>
    <property type="evidence" value="ECO:0000318"/>
    <property type="project" value="GO_Central"/>
</dbReference>
<dbReference type="GO" id="GO:0000956">
    <property type="term" value="P:nuclear-transcribed mRNA catabolic process"/>
    <property type="evidence" value="ECO:0007669"/>
    <property type="project" value="InterPro"/>
</dbReference>
<dbReference type="GO" id="GO:0033962">
    <property type="term" value="P:P-body assembly"/>
    <property type="evidence" value="ECO:0000318"/>
    <property type="project" value="GO_Central"/>
</dbReference>
<dbReference type="GO" id="GO:0000387">
    <property type="term" value="P:spliceosomal snRNP assembly"/>
    <property type="evidence" value="ECO:0000318"/>
    <property type="project" value="GO_Central"/>
</dbReference>
<dbReference type="CDD" id="cd01723">
    <property type="entry name" value="LSm4"/>
    <property type="match status" value="1"/>
</dbReference>
<dbReference type="FunFam" id="2.30.30.100:FF:000005">
    <property type="entry name" value="U6 snRNA-associated Sm-like protein LSm4"/>
    <property type="match status" value="1"/>
</dbReference>
<dbReference type="Gene3D" id="2.30.30.100">
    <property type="match status" value="1"/>
</dbReference>
<dbReference type="InterPro" id="IPR034101">
    <property type="entry name" value="Lsm4"/>
</dbReference>
<dbReference type="InterPro" id="IPR027141">
    <property type="entry name" value="LSm4/Sm_D1/D3"/>
</dbReference>
<dbReference type="InterPro" id="IPR010920">
    <property type="entry name" value="LSM_dom_sf"/>
</dbReference>
<dbReference type="InterPro" id="IPR047575">
    <property type="entry name" value="Sm"/>
</dbReference>
<dbReference type="InterPro" id="IPR001163">
    <property type="entry name" value="Sm_dom_euk/arc"/>
</dbReference>
<dbReference type="PANTHER" id="PTHR23338">
    <property type="entry name" value="SMALL NUCLEAR RIBONUCLEOPROTEIN SM"/>
    <property type="match status" value="1"/>
</dbReference>
<dbReference type="Pfam" id="PF01423">
    <property type="entry name" value="LSM"/>
    <property type="match status" value="1"/>
</dbReference>
<dbReference type="SMART" id="SM00651">
    <property type="entry name" value="Sm"/>
    <property type="match status" value="1"/>
</dbReference>
<dbReference type="SUPFAM" id="SSF50182">
    <property type="entry name" value="Sm-like ribonucleoproteins"/>
    <property type="match status" value="1"/>
</dbReference>
<dbReference type="PROSITE" id="PS52002">
    <property type="entry name" value="SM"/>
    <property type="match status" value="1"/>
</dbReference>
<proteinExistence type="evidence at transcript level"/>
<name>LSM4_TOBAC</name>
<protein>
    <recommendedName>
        <fullName>Probable U6 snRNA-associated Sm-like protein LSm4</fullName>
    </recommendedName>
    <alternativeName>
        <fullName>Glycine-rich protein 10</fullName>
        <shortName>GRP 10</shortName>
    </alternativeName>
</protein>
<reference key="1">
    <citation type="submission" date="1995-01" db="EMBL/GenBank/DDBJ databases">
        <authorList>
            <person name="Lerchl J."/>
        </authorList>
    </citation>
    <scope>NUCLEOTIDE SEQUENCE [MRNA]</scope>
    <source>
        <strain>cv. Samsun NN</strain>
        <tissue>Leaf</tissue>
    </source>
</reference>
<feature type="chain" id="PRO_0000125569" description="Probable U6 snRNA-associated Sm-like protein LSm4">
    <location>
        <begin position="1"/>
        <end position="146"/>
    </location>
</feature>
<feature type="domain" description="Sm" evidence="2">
    <location>
        <begin position="2"/>
        <end position="75"/>
    </location>
</feature>
<feature type="region of interest" description="Disordered" evidence="3">
    <location>
        <begin position="80"/>
        <end position="146"/>
    </location>
</feature>
<feature type="compositionally biased region" description="Basic and acidic residues" evidence="3">
    <location>
        <begin position="80"/>
        <end position="91"/>
    </location>
</feature>
<feature type="compositionally biased region" description="Gly residues" evidence="3">
    <location>
        <begin position="137"/>
        <end position="146"/>
    </location>
</feature>
<keyword id="KW-0507">mRNA processing</keyword>
<keyword id="KW-0508">mRNA splicing</keyword>
<keyword id="KW-0539">Nucleus</keyword>
<keyword id="KW-1185">Reference proteome</keyword>
<keyword id="KW-0687">Ribonucleoprotein</keyword>
<keyword id="KW-0694">RNA-binding</keyword>
<keyword id="KW-0747">Spliceosome</keyword>